<name>GUN2_EVAC2</name>
<protein>
    <recommendedName>
        <fullName>Endoglucanase B</fullName>
        <ecNumber>3.2.1.4</ecNumber>
    </recommendedName>
    <alternativeName>
        <fullName>Cellulase B</fullName>
    </alternativeName>
    <alternativeName>
        <fullName>Endo-1,4-beta-glucanase B</fullName>
    </alternativeName>
</protein>
<dbReference type="EC" id="3.2.1.4"/>
<dbReference type="EMBL" id="M14729">
    <property type="protein sequence ID" value="AAA22299.1"/>
    <property type="molecule type" value="Genomic_DNA"/>
</dbReference>
<dbReference type="PIR" id="B25156">
    <property type="entry name" value="B25156"/>
</dbReference>
<dbReference type="SMR" id="P06565"/>
<dbReference type="STRING" id="649639.Bcell_0437"/>
<dbReference type="eggNOG" id="COG2730">
    <property type="taxonomic scope" value="Bacteria"/>
</dbReference>
<dbReference type="GO" id="GO:0005576">
    <property type="term" value="C:extracellular region"/>
    <property type="evidence" value="ECO:0007669"/>
    <property type="project" value="InterPro"/>
</dbReference>
<dbReference type="GO" id="GO:0030246">
    <property type="term" value="F:carbohydrate binding"/>
    <property type="evidence" value="ECO:0007669"/>
    <property type="project" value="InterPro"/>
</dbReference>
<dbReference type="GO" id="GO:0008810">
    <property type="term" value="F:cellulase activity"/>
    <property type="evidence" value="ECO:0007669"/>
    <property type="project" value="UniProtKB-EC"/>
</dbReference>
<dbReference type="GO" id="GO:0030245">
    <property type="term" value="P:cellulose catabolic process"/>
    <property type="evidence" value="ECO:0007669"/>
    <property type="project" value="UniProtKB-KW"/>
</dbReference>
<dbReference type="CDD" id="cd12215">
    <property type="entry name" value="ChiC_BD"/>
    <property type="match status" value="1"/>
</dbReference>
<dbReference type="Gene3D" id="2.10.10.20">
    <property type="entry name" value="Carbohydrate-binding module superfamily 5/12"/>
    <property type="match status" value="1"/>
</dbReference>
<dbReference type="Gene3D" id="3.20.20.80">
    <property type="entry name" value="Glycosidases"/>
    <property type="match status" value="1"/>
</dbReference>
<dbReference type="InterPro" id="IPR003610">
    <property type="entry name" value="CBM5/12"/>
</dbReference>
<dbReference type="InterPro" id="IPR036573">
    <property type="entry name" value="CBM_sf_5/12"/>
</dbReference>
<dbReference type="InterPro" id="IPR001547">
    <property type="entry name" value="Glyco_hydro_5"/>
</dbReference>
<dbReference type="InterPro" id="IPR018087">
    <property type="entry name" value="Glyco_hydro_5_CS"/>
</dbReference>
<dbReference type="InterPro" id="IPR017853">
    <property type="entry name" value="Glycoside_hydrolase_SF"/>
</dbReference>
<dbReference type="PANTHER" id="PTHR34142">
    <property type="entry name" value="ENDO-BETA-1,4-GLUCANASE A"/>
    <property type="match status" value="1"/>
</dbReference>
<dbReference type="PANTHER" id="PTHR34142:SF1">
    <property type="entry name" value="GLYCOSIDE HYDROLASE FAMILY 5 DOMAIN-CONTAINING PROTEIN"/>
    <property type="match status" value="1"/>
</dbReference>
<dbReference type="Pfam" id="PF02839">
    <property type="entry name" value="CBM_5_12"/>
    <property type="match status" value="1"/>
</dbReference>
<dbReference type="Pfam" id="PF00150">
    <property type="entry name" value="Cellulase"/>
    <property type="match status" value="1"/>
</dbReference>
<dbReference type="SMART" id="SM00495">
    <property type="entry name" value="ChtBD3"/>
    <property type="match status" value="1"/>
</dbReference>
<dbReference type="SUPFAM" id="SSF51445">
    <property type="entry name" value="(Trans)glycosidases"/>
    <property type="match status" value="1"/>
</dbReference>
<dbReference type="SUPFAM" id="SSF51055">
    <property type="entry name" value="Carbohydrate binding domain"/>
    <property type="match status" value="1"/>
</dbReference>
<dbReference type="PROSITE" id="PS00659">
    <property type="entry name" value="GLYCOSYL_HYDROL_F5"/>
    <property type="match status" value="1"/>
</dbReference>
<evidence type="ECO:0000250" key="1">
    <source>
        <dbReference type="UniProtKB" id="O85465"/>
    </source>
</evidence>
<evidence type="ECO:0000256" key="2">
    <source>
        <dbReference type="SAM" id="MobiDB-lite"/>
    </source>
</evidence>
<evidence type="ECO:0000305" key="3"/>
<sequence>MKKITTIFVVLLMTLALFIIGNTTAADDYSVVEEHGQLSISNGELVNDRGEPVQLKGMSSHGLQWYGQFVNYESMKWLRDDWGITVFRAAMYTSSGGYIEDPSVKEKVKEAVEAAIDLGIYVIIDWHILSDNDPNIYKEEAKDFFDEMSELYGDYPNVIYEIANEPNGSDVTWDNQIKPYAEEVIPVIRNNDPNNIIIVGTGTWSQDVHHAADNQLTDPNVMYAFHFYAGTHGQNLRDQVDYALDQGAAIFVSEWGTSEATGDGGVFLDEAQVWIDFMDERNLSWANWSLTHKDESSAALMPGASPTGGWTEAELSPSGTFVREKIRESATTPPSDPTPPSDPDPGEPEPDPGEPDPTPPSDPGDYPAWDPNTIYTDEIVYHNGQLWQAKWWTQNQEPGDPYGPWEPLN</sequence>
<comment type="catalytic activity">
    <reaction>
        <text>Endohydrolysis of (1-&gt;4)-beta-D-glucosidic linkages in cellulose, lichenin and cereal beta-D-glucans.</text>
        <dbReference type="EC" id="3.2.1.4"/>
    </reaction>
</comment>
<comment type="similarity">
    <text evidence="3">Belongs to the glycosyl hydrolase 5 (cellulase A) family.</text>
</comment>
<feature type="chain" id="PRO_0000184045" description="Endoglucanase B">
    <location>
        <begin position="1"/>
        <end position="409"/>
    </location>
</feature>
<feature type="region of interest" description="Disordered" evidence="2">
    <location>
        <begin position="326"/>
        <end position="372"/>
    </location>
</feature>
<feature type="compositionally biased region" description="Pro residues" evidence="2">
    <location>
        <begin position="334"/>
        <end position="343"/>
    </location>
</feature>
<feature type="compositionally biased region" description="Acidic residues" evidence="2">
    <location>
        <begin position="344"/>
        <end position="354"/>
    </location>
</feature>
<feature type="active site" description="Proton donor" evidence="1">
    <location>
        <position position="165"/>
    </location>
</feature>
<feature type="active site" description="Nucleophile" evidence="1">
    <location>
        <position position="254"/>
    </location>
</feature>
<feature type="binding site" evidence="1">
    <location>
        <position position="61"/>
    </location>
    <ligand>
        <name>substrate</name>
    </ligand>
</feature>
<feature type="binding site" evidence="1">
    <location>
        <begin position="65"/>
        <end position="66"/>
    </location>
    <ligand>
        <name>substrate</name>
    </ligand>
</feature>
<feature type="binding site" evidence="1">
    <location>
        <position position="92"/>
    </location>
    <ligand>
        <name>substrate</name>
    </ligand>
</feature>
<feature type="binding site" evidence="1">
    <location>
        <position position="127"/>
    </location>
    <ligand>
        <name>substrate</name>
    </ligand>
</feature>
<feature type="binding site" evidence="1">
    <location>
        <position position="228"/>
    </location>
    <ligand>
        <name>substrate</name>
    </ligand>
</feature>
<feature type="binding site" evidence="1">
    <location>
        <begin position="260"/>
        <end position="261"/>
    </location>
    <ligand>
        <name>substrate</name>
    </ligand>
</feature>
<feature type="binding site" evidence="1">
    <location>
        <position position="288"/>
    </location>
    <ligand>
        <name>substrate</name>
    </ligand>
</feature>
<feature type="binding site" evidence="1">
    <location>
        <begin position="293"/>
        <end position="295"/>
    </location>
    <ligand>
        <name>substrate</name>
    </ligand>
</feature>
<gene>
    <name type="primary">celB</name>
</gene>
<organism>
    <name type="scientific">Evansella cellulosilytica (strain ATCC 21833 / DSM 2522 / FERM P-1141 / JCM 9156 / N-4)</name>
    <name type="common">Bacillus cellulosilyticus</name>
    <dbReference type="NCBI Taxonomy" id="649639"/>
    <lineage>
        <taxon>Bacteria</taxon>
        <taxon>Bacillati</taxon>
        <taxon>Bacillota</taxon>
        <taxon>Bacilli</taxon>
        <taxon>Bacillales</taxon>
        <taxon>Bacillaceae</taxon>
        <taxon>Evansella</taxon>
    </lineage>
</organism>
<accession>P06565</accession>
<proteinExistence type="inferred from homology"/>
<keyword id="KW-0119">Carbohydrate metabolism</keyword>
<keyword id="KW-0136">Cellulose degradation</keyword>
<keyword id="KW-0326">Glycosidase</keyword>
<keyword id="KW-0378">Hydrolase</keyword>
<keyword id="KW-0624">Polysaccharide degradation</keyword>
<reference key="1">
    <citation type="journal article" date="1986" name="J. Bacteriol.">
        <title>Nucleotide sequences of two cellulase genes from alkalophilic Bacillus sp. strain N-4 and their strong homology.</title>
        <authorList>
            <person name="Fukumori F."/>
            <person name="Sashihara N."/>
            <person name="Kudo T."/>
            <person name="Horikoshi K."/>
        </authorList>
    </citation>
    <scope>NUCLEOTIDE SEQUENCE [GENOMIC DNA]</scope>
</reference>